<proteinExistence type="inferred from homology"/>
<sequence length="61" mass="7001">MAKDYVTGKRTHFGNTRSHALNHSRRSWKANLQKVRILVDGKPKKVWVSARTLKSGKVTRV</sequence>
<accession>Q88WK6</accession>
<accession>F9UNZ7</accession>
<gene>
    <name evidence="1" type="primary">rpmB</name>
    <name type="ordered locus">lp_1624</name>
</gene>
<name>RL28_LACPL</name>
<keyword id="KW-1185">Reference proteome</keyword>
<keyword id="KW-0687">Ribonucleoprotein</keyword>
<keyword id="KW-0689">Ribosomal protein</keyword>
<reference key="1">
    <citation type="journal article" date="2003" name="Proc. Natl. Acad. Sci. U.S.A.">
        <title>Complete genome sequence of Lactobacillus plantarum WCFS1.</title>
        <authorList>
            <person name="Kleerebezem M."/>
            <person name="Boekhorst J."/>
            <person name="van Kranenburg R."/>
            <person name="Molenaar D."/>
            <person name="Kuipers O.P."/>
            <person name="Leer R."/>
            <person name="Tarchini R."/>
            <person name="Peters S.A."/>
            <person name="Sandbrink H.M."/>
            <person name="Fiers M.W.E.J."/>
            <person name="Stiekema W."/>
            <person name="Klein Lankhorst R.M."/>
            <person name="Bron P.A."/>
            <person name="Hoffer S.M."/>
            <person name="Nierop Groot M.N."/>
            <person name="Kerkhoven R."/>
            <person name="De Vries M."/>
            <person name="Ursing B."/>
            <person name="De Vos W.M."/>
            <person name="Siezen R.J."/>
        </authorList>
    </citation>
    <scope>NUCLEOTIDE SEQUENCE [LARGE SCALE GENOMIC DNA]</scope>
    <source>
        <strain>ATCC BAA-793 / NCIMB 8826 / WCFS1</strain>
    </source>
</reference>
<reference key="2">
    <citation type="journal article" date="2012" name="J. Bacteriol.">
        <title>Complete resequencing and reannotation of the Lactobacillus plantarum WCFS1 genome.</title>
        <authorList>
            <person name="Siezen R.J."/>
            <person name="Francke C."/>
            <person name="Renckens B."/>
            <person name="Boekhorst J."/>
            <person name="Wels M."/>
            <person name="Kleerebezem M."/>
            <person name="van Hijum S.A."/>
        </authorList>
    </citation>
    <scope>NUCLEOTIDE SEQUENCE [LARGE SCALE GENOMIC DNA]</scope>
    <scope>GENOME REANNOTATION</scope>
    <source>
        <strain>ATCC BAA-793 / NCIMB 8826 / WCFS1</strain>
    </source>
</reference>
<evidence type="ECO:0000255" key="1">
    <source>
        <dbReference type="HAMAP-Rule" id="MF_00373"/>
    </source>
</evidence>
<evidence type="ECO:0000256" key="2">
    <source>
        <dbReference type="SAM" id="MobiDB-lite"/>
    </source>
</evidence>
<evidence type="ECO:0000305" key="3"/>
<comment type="similarity">
    <text evidence="1">Belongs to the bacterial ribosomal protein bL28 family.</text>
</comment>
<organism>
    <name type="scientific">Lactiplantibacillus plantarum (strain ATCC BAA-793 / NCIMB 8826 / WCFS1)</name>
    <name type="common">Lactobacillus plantarum</name>
    <dbReference type="NCBI Taxonomy" id="220668"/>
    <lineage>
        <taxon>Bacteria</taxon>
        <taxon>Bacillati</taxon>
        <taxon>Bacillota</taxon>
        <taxon>Bacilli</taxon>
        <taxon>Lactobacillales</taxon>
        <taxon>Lactobacillaceae</taxon>
        <taxon>Lactiplantibacillus</taxon>
    </lineage>
</organism>
<protein>
    <recommendedName>
        <fullName evidence="1">Large ribosomal subunit protein bL28</fullName>
    </recommendedName>
    <alternativeName>
        <fullName evidence="3">50S ribosomal protein L28</fullName>
    </alternativeName>
</protein>
<dbReference type="EMBL" id="AL935263">
    <property type="protein sequence ID" value="CCC78936.1"/>
    <property type="molecule type" value="Genomic_DNA"/>
</dbReference>
<dbReference type="RefSeq" id="WP_003638622.1">
    <property type="nucleotide sequence ID" value="NC_004567.2"/>
</dbReference>
<dbReference type="RefSeq" id="YP_004889450.1">
    <property type="nucleotide sequence ID" value="NC_004567.2"/>
</dbReference>
<dbReference type="SMR" id="Q88WK6"/>
<dbReference type="STRING" id="220668.lp_1624"/>
<dbReference type="EnsemblBacteria" id="CCC78936">
    <property type="protein sequence ID" value="CCC78936"/>
    <property type="gene ID" value="lp_1624"/>
</dbReference>
<dbReference type="GeneID" id="89669005"/>
<dbReference type="KEGG" id="lpl:lp_1624"/>
<dbReference type="PATRIC" id="fig|220668.9.peg.1372"/>
<dbReference type="eggNOG" id="COG0227">
    <property type="taxonomic scope" value="Bacteria"/>
</dbReference>
<dbReference type="HOGENOM" id="CLU_064548_7_1_9"/>
<dbReference type="OrthoDB" id="9805609at2"/>
<dbReference type="PhylomeDB" id="Q88WK6"/>
<dbReference type="Proteomes" id="UP000000432">
    <property type="component" value="Chromosome"/>
</dbReference>
<dbReference type="GO" id="GO:1990904">
    <property type="term" value="C:ribonucleoprotein complex"/>
    <property type="evidence" value="ECO:0007669"/>
    <property type="project" value="UniProtKB-KW"/>
</dbReference>
<dbReference type="GO" id="GO:0005840">
    <property type="term" value="C:ribosome"/>
    <property type="evidence" value="ECO:0007669"/>
    <property type="project" value="UniProtKB-KW"/>
</dbReference>
<dbReference type="GO" id="GO:0003735">
    <property type="term" value="F:structural constituent of ribosome"/>
    <property type="evidence" value="ECO:0007669"/>
    <property type="project" value="InterPro"/>
</dbReference>
<dbReference type="GO" id="GO:0006412">
    <property type="term" value="P:translation"/>
    <property type="evidence" value="ECO:0007669"/>
    <property type="project" value="UniProtKB-UniRule"/>
</dbReference>
<dbReference type="Gene3D" id="2.30.170.40">
    <property type="entry name" value="Ribosomal protein L28/L24"/>
    <property type="match status" value="1"/>
</dbReference>
<dbReference type="HAMAP" id="MF_00373">
    <property type="entry name" value="Ribosomal_bL28"/>
    <property type="match status" value="1"/>
</dbReference>
<dbReference type="InterPro" id="IPR050096">
    <property type="entry name" value="Bacterial_rp_bL28"/>
</dbReference>
<dbReference type="InterPro" id="IPR026569">
    <property type="entry name" value="Ribosomal_bL28"/>
</dbReference>
<dbReference type="InterPro" id="IPR034704">
    <property type="entry name" value="Ribosomal_bL28/bL31-like_sf"/>
</dbReference>
<dbReference type="InterPro" id="IPR001383">
    <property type="entry name" value="Ribosomal_bL28_bact-type"/>
</dbReference>
<dbReference type="InterPro" id="IPR037147">
    <property type="entry name" value="Ribosomal_bL28_sf"/>
</dbReference>
<dbReference type="NCBIfam" id="TIGR00009">
    <property type="entry name" value="L28"/>
    <property type="match status" value="1"/>
</dbReference>
<dbReference type="PANTHER" id="PTHR39080">
    <property type="entry name" value="50S RIBOSOMAL PROTEIN L28"/>
    <property type="match status" value="1"/>
</dbReference>
<dbReference type="PANTHER" id="PTHR39080:SF1">
    <property type="entry name" value="LARGE RIBOSOMAL SUBUNIT PROTEIN BL28A"/>
    <property type="match status" value="1"/>
</dbReference>
<dbReference type="Pfam" id="PF00830">
    <property type="entry name" value="Ribosomal_L28"/>
    <property type="match status" value="1"/>
</dbReference>
<dbReference type="SUPFAM" id="SSF143800">
    <property type="entry name" value="L28p-like"/>
    <property type="match status" value="1"/>
</dbReference>
<feature type="chain" id="PRO_0000178488" description="Large ribosomal subunit protein bL28">
    <location>
        <begin position="1"/>
        <end position="61"/>
    </location>
</feature>
<feature type="region of interest" description="Disordered" evidence="2">
    <location>
        <begin position="1"/>
        <end position="26"/>
    </location>
</feature>